<proteinExistence type="inferred from homology"/>
<reference key="1">
    <citation type="journal article" date="1996" name="DNA Res.">
        <title>Sequence analysis of the genome of the unicellular cyanobacterium Synechocystis sp. strain PCC6803. II. Sequence determination of the entire genome and assignment of potential protein-coding regions.</title>
        <authorList>
            <person name="Kaneko T."/>
            <person name="Sato S."/>
            <person name="Kotani H."/>
            <person name="Tanaka A."/>
            <person name="Asamizu E."/>
            <person name="Nakamura Y."/>
            <person name="Miyajima N."/>
            <person name="Hirosawa M."/>
            <person name="Sugiura M."/>
            <person name="Sasamoto S."/>
            <person name="Kimura T."/>
            <person name="Hosouchi T."/>
            <person name="Matsuno A."/>
            <person name="Muraki A."/>
            <person name="Nakazaki N."/>
            <person name="Naruo K."/>
            <person name="Okumura S."/>
            <person name="Shimpo S."/>
            <person name="Takeuchi C."/>
            <person name="Wada T."/>
            <person name="Watanabe A."/>
            <person name="Yamada M."/>
            <person name="Yasuda M."/>
            <person name="Tabata S."/>
        </authorList>
    </citation>
    <scope>NUCLEOTIDE SEQUENCE [LARGE SCALE GENOMIC DNA]</scope>
    <source>
        <strain>ATCC 27184 / PCC 6803 / Kazusa</strain>
    </source>
</reference>
<evidence type="ECO:0000255" key="1">
    <source>
        <dbReference type="HAMAP-Rule" id="MF_00131"/>
    </source>
</evidence>
<sequence>MNAVAACFNALRQRGECALIPFLTAGDPDLATTAEALRILDRAGADLIELGVPYSDPLADGPVIQAAATRALQKGVKLDDVLAIVREVHQDIAAPIILFTYYNPIFYQGVEVFLDKIKAAGVKGLVVPDLPLEESDRLLEATAERGLELILLVAPTSSPERQTAIAKKSQGFVYLVSVTGVTGVRTEVGSRVEALLAGMRQVTDKPIGVGFGISQPEQAEQVKAWGADAVIVGSAMVKRLAEGTPTEGLQALETFCRELKTAIS</sequence>
<feature type="chain" id="PRO_0000098863" description="Tryptophan synthase alpha chain">
    <location>
        <begin position="1"/>
        <end position="264"/>
    </location>
</feature>
<feature type="active site" description="Proton acceptor" evidence="1">
    <location>
        <position position="49"/>
    </location>
</feature>
<feature type="active site" description="Proton acceptor" evidence="1">
    <location>
        <position position="60"/>
    </location>
</feature>
<name>TRPA_SYNY3</name>
<organism>
    <name type="scientific">Synechocystis sp. (strain ATCC 27184 / PCC 6803 / Kazusa)</name>
    <dbReference type="NCBI Taxonomy" id="1111708"/>
    <lineage>
        <taxon>Bacteria</taxon>
        <taxon>Bacillati</taxon>
        <taxon>Cyanobacteriota</taxon>
        <taxon>Cyanophyceae</taxon>
        <taxon>Synechococcales</taxon>
        <taxon>Merismopediaceae</taxon>
        <taxon>Synechocystis</taxon>
    </lineage>
</organism>
<comment type="function">
    <text evidence="1">The alpha subunit is responsible for the aldol cleavage of indoleglycerol phosphate to indole and glyceraldehyde 3-phosphate.</text>
</comment>
<comment type="catalytic activity">
    <reaction evidence="1">
        <text>(1S,2R)-1-C-(indol-3-yl)glycerol 3-phosphate + L-serine = D-glyceraldehyde 3-phosphate + L-tryptophan + H2O</text>
        <dbReference type="Rhea" id="RHEA:10532"/>
        <dbReference type="ChEBI" id="CHEBI:15377"/>
        <dbReference type="ChEBI" id="CHEBI:33384"/>
        <dbReference type="ChEBI" id="CHEBI:57912"/>
        <dbReference type="ChEBI" id="CHEBI:58866"/>
        <dbReference type="ChEBI" id="CHEBI:59776"/>
        <dbReference type="EC" id="4.2.1.20"/>
    </reaction>
</comment>
<comment type="pathway">
    <text evidence="1">Amino-acid biosynthesis; L-tryptophan biosynthesis; L-tryptophan from chorismate: step 5/5.</text>
</comment>
<comment type="subunit">
    <text evidence="1">Tetramer of two alpha and two beta chains.</text>
</comment>
<comment type="similarity">
    <text evidence="1">Belongs to the TrpA family.</text>
</comment>
<keyword id="KW-0028">Amino-acid biosynthesis</keyword>
<keyword id="KW-0057">Aromatic amino acid biosynthesis</keyword>
<keyword id="KW-0456">Lyase</keyword>
<keyword id="KW-1185">Reference proteome</keyword>
<keyword id="KW-0822">Tryptophan biosynthesis</keyword>
<gene>
    <name evidence="1" type="primary">trpA</name>
    <name type="ordered locus">slr0966</name>
</gene>
<accession>P77960</accession>
<dbReference type="EC" id="4.2.1.20" evidence="1"/>
<dbReference type="EMBL" id="BA000022">
    <property type="protein sequence ID" value="BAA16872.1"/>
    <property type="molecule type" value="Genomic_DNA"/>
</dbReference>
<dbReference type="PIR" id="S74721">
    <property type="entry name" value="S74721"/>
</dbReference>
<dbReference type="SMR" id="P77960"/>
<dbReference type="FunCoup" id="P77960">
    <property type="interactions" value="349"/>
</dbReference>
<dbReference type="IntAct" id="P77960">
    <property type="interactions" value="1"/>
</dbReference>
<dbReference type="STRING" id="1148.gene:10497731"/>
<dbReference type="PaxDb" id="1148-1651946"/>
<dbReference type="EnsemblBacteria" id="BAA16872">
    <property type="protein sequence ID" value="BAA16872"/>
    <property type="gene ID" value="BAA16872"/>
</dbReference>
<dbReference type="KEGG" id="syn:slr0966"/>
<dbReference type="eggNOG" id="COG0159">
    <property type="taxonomic scope" value="Bacteria"/>
</dbReference>
<dbReference type="InParanoid" id="P77960"/>
<dbReference type="PhylomeDB" id="P77960"/>
<dbReference type="UniPathway" id="UPA00035">
    <property type="reaction ID" value="UER00044"/>
</dbReference>
<dbReference type="Proteomes" id="UP000001425">
    <property type="component" value="Chromosome"/>
</dbReference>
<dbReference type="GO" id="GO:0005829">
    <property type="term" value="C:cytosol"/>
    <property type="evidence" value="ECO:0000318"/>
    <property type="project" value="GO_Central"/>
</dbReference>
<dbReference type="GO" id="GO:0004834">
    <property type="term" value="F:tryptophan synthase activity"/>
    <property type="evidence" value="ECO:0000318"/>
    <property type="project" value="GO_Central"/>
</dbReference>
<dbReference type="GO" id="GO:0000162">
    <property type="term" value="P:L-tryptophan biosynthetic process"/>
    <property type="evidence" value="ECO:0000318"/>
    <property type="project" value="GO_Central"/>
</dbReference>
<dbReference type="CDD" id="cd04724">
    <property type="entry name" value="Tryptophan_synthase_alpha"/>
    <property type="match status" value="1"/>
</dbReference>
<dbReference type="FunFam" id="3.20.20.70:FF:000107">
    <property type="entry name" value="Tryptophan synthase alpha chain, chloroplastic"/>
    <property type="match status" value="1"/>
</dbReference>
<dbReference type="Gene3D" id="3.20.20.70">
    <property type="entry name" value="Aldolase class I"/>
    <property type="match status" value="1"/>
</dbReference>
<dbReference type="HAMAP" id="MF_00131">
    <property type="entry name" value="Trp_synth_alpha"/>
    <property type="match status" value="1"/>
</dbReference>
<dbReference type="InterPro" id="IPR013785">
    <property type="entry name" value="Aldolase_TIM"/>
</dbReference>
<dbReference type="InterPro" id="IPR011060">
    <property type="entry name" value="RibuloseP-bd_barrel"/>
</dbReference>
<dbReference type="InterPro" id="IPR018204">
    <property type="entry name" value="Trp_synthase_alpha_AS"/>
</dbReference>
<dbReference type="InterPro" id="IPR002028">
    <property type="entry name" value="Trp_synthase_suA"/>
</dbReference>
<dbReference type="NCBIfam" id="TIGR00262">
    <property type="entry name" value="trpA"/>
    <property type="match status" value="1"/>
</dbReference>
<dbReference type="PANTHER" id="PTHR43406:SF1">
    <property type="entry name" value="TRYPTOPHAN SYNTHASE ALPHA CHAIN, CHLOROPLASTIC"/>
    <property type="match status" value="1"/>
</dbReference>
<dbReference type="PANTHER" id="PTHR43406">
    <property type="entry name" value="TRYPTOPHAN SYNTHASE, ALPHA CHAIN"/>
    <property type="match status" value="1"/>
</dbReference>
<dbReference type="Pfam" id="PF00290">
    <property type="entry name" value="Trp_syntA"/>
    <property type="match status" value="1"/>
</dbReference>
<dbReference type="SUPFAM" id="SSF51366">
    <property type="entry name" value="Ribulose-phoshate binding barrel"/>
    <property type="match status" value="1"/>
</dbReference>
<dbReference type="PROSITE" id="PS00167">
    <property type="entry name" value="TRP_SYNTHASE_ALPHA"/>
    <property type="match status" value="1"/>
</dbReference>
<protein>
    <recommendedName>
        <fullName evidence="1">Tryptophan synthase alpha chain</fullName>
        <ecNumber evidence="1">4.2.1.20</ecNumber>
    </recommendedName>
</protein>